<proteinExistence type="evidence at protein level"/>
<evidence type="ECO:0000250" key="1">
    <source>
        <dbReference type="UniProtKB" id="O22286"/>
    </source>
</evidence>
<evidence type="ECO:0000250" key="2">
    <source>
        <dbReference type="UniProtKB" id="P93002"/>
    </source>
</evidence>
<evidence type="ECO:0000250" key="3">
    <source>
        <dbReference type="UniProtKB" id="Q5ICL9"/>
    </source>
</evidence>
<evidence type="ECO:0000255" key="4"/>
<evidence type="ECO:0000255" key="5">
    <source>
        <dbReference type="PROSITE-ProRule" id="PRU00037"/>
    </source>
</evidence>
<evidence type="ECO:0000255" key="6">
    <source>
        <dbReference type="PROSITE-ProRule" id="PRU01391"/>
    </source>
</evidence>
<evidence type="ECO:0000256" key="7">
    <source>
        <dbReference type="SAM" id="MobiDB-lite"/>
    </source>
</evidence>
<evidence type="ECO:0000269" key="8">
    <source>
    </source>
</evidence>
<evidence type="ECO:0000269" key="9">
    <source>
    </source>
</evidence>
<evidence type="ECO:0000269" key="10">
    <source>
    </source>
</evidence>
<evidence type="ECO:0000269" key="11">
    <source>
    </source>
</evidence>
<evidence type="ECO:0000269" key="12">
    <source>
    </source>
</evidence>
<evidence type="ECO:0000303" key="13">
    <source>
    </source>
</evidence>
<evidence type="ECO:0000305" key="14"/>
<evidence type="ECO:0000312" key="15">
    <source>
        <dbReference type="EMBL" id="BAB12719.1"/>
    </source>
</evidence>
<evidence type="ECO:0000312" key="16">
    <source>
        <dbReference type="EMBL" id="BAB16860.1"/>
    </source>
</evidence>
<evidence type="ECO:0000312" key="17">
    <source>
        <dbReference type="EMBL" id="BAF04200.1"/>
    </source>
</evidence>
<dbReference type="EMBL" id="DQ450947">
    <property type="protein sequence ID" value="ABE11613.1"/>
    <property type="molecule type" value="mRNA"/>
</dbReference>
<dbReference type="EMBL" id="DQ450948">
    <property type="protein sequence ID" value="ABE11614.1"/>
    <property type="molecule type" value="Genomic_DNA"/>
</dbReference>
<dbReference type="EMBL" id="AY323485">
    <property type="protein sequence ID" value="AAP92751.1"/>
    <property type="molecule type" value="mRNA"/>
</dbReference>
<dbReference type="EMBL" id="HM991169">
    <property type="protein sequence ID" value="AEF30412.1"/>
    <property type="molecule type" value="mRNA"/>
</dbReference>
<dbReference type="EMBL" id="AP002537">
    <property type="protein sequence ID" value="BAB16860.1"/>
    <property type="molecule type" value="Genomic_DNA"/>
</dbReference>
<dbReference type="EMBL" id="AP002746">
    <property type="protein sequence ID" value="BAB12719.1"/>
    <property type="molecule type" value="Genomic_DNA"/>
</dbReference>
<dbReference type="EMBL" id="AP008207">
    <property type="protein sequence ID" value="BAF04200.1"/>
    <property type="molecule type" value="Genomic_DNA"/>
</dbReference>
<dbReference type="EMBL" id="AP014957">
    <property type="protein sequence ID" value="BAS70853.1"/>
    <property type="molecule type" value="Genomic_DNA"/>
</dbReference>
<dbReference type="EMBL" id="AK120715">
    <property type="protein sequence ID" value="BAH00140.1"/>
    <property type="molecule type" value="mRNA"/>
</dbReference>
<dbReference type="RefSeq" id="XP_015622114.1">
    <property type="nucleotide sequence ID" value="XM_015766628.1"/>
</dbReference>
<dbReference type="SMR" id="Q9FDY4"/>
<dbReference type="FunCoup" id="Q9FDY4">
    <property type="interactions" value="1032"/>
</dbReference>
<dbReference type="STRING" id="39947.Q9FDY4"/>
<dbReference type="PaxDb" id="39947-Q9FDY4"/>
<dbReference type="EnsemblPlants" id="Os01t0194300-01">
    <property type="protein sequence ID" value="Os01t0194300-01"/>
    <property type="gene ID" value="Os01g0194300"/>
</dbReference>
<dbReference type="Gramene" id="Os01t0194300-01">
    <property type="protein sequence ID" value="Os01t0194300-01"/>
    <property type="gene ID" value="Os01g0194300"/>
</dbReference>
<dbReference type="KEGG" id="dosa:Os01g0194300"/>
<dbReference type="eggNOG" id="KOG0504">
    <property type="taxonomic scope" value="Eukaryota"/>
</dbReference>
<dbReference type="HOGENOM" id="CLU_034895_1_0_1"/>
<dbReference type="InParanoid" id="Q9FDY4"/>
<dbReference type="OMA" id="HPAVAFM"/>
<dbReference type="OrthoDB" id="71307at2759"/>
<dbReference type="PlantReactome" id="R-OSA-6788019">
    <property type="pathway name" value="Salicylic acid signaling"/>
</dbReference>
<dbReference type="UniPathway" id="UPA00143"/>
<dbReference type="Proteomes" id="UP000000763">
    <property type="component" value="Chromosome 1"/>
</dbReference>
<dbReference type="Proteomes" id="UP000059680">
    <property type="component" value="Chromosome 1"/>
</dbReference>
<dbReference type="GO" id="GO:0005737">
    <property type="term" value="C:cytoplasm"/>
    <property type="evidence" value="ECO:0000314"/>
    <property type="project" value="UniProtKB"/>
</dbReference>
<dbReference type="GO" id="GO:0016604">
    <property type="term" value="C:nuclear body"/>
    <property type="evidence" value="ECO:0007669"/>
    <property type="project" value="UniProtKB-SubCell"/>
</dbReference>
<dbReference type="GO" id="GO:0005634">
    <property type="term" value="C:nucleus"/>
    <property type="evidence" value="ECO:0000314"/>
    <property type="project" value="UniProtKB"/>
</dbReference>
<dbReference type="GO" id="GO:0090575">
    <property type="term" value="C:RNA polymerase II transcription regulator complex"/>
    <property type="evidence" value="ECO:0007669"/>
    <property type="project" value="EnsemblPlants"/>
</dbReference>
<dbReference type="GO" id="GO:1901149">
    <property type="term" value="F:salicylic acid binding"/>
    <property type="evidence" value="ECO:0007669"/>
    <property type="project" value="EnsemblPlants"/>
</dbReference>
<dbReference type="GO" id="GO:0003712">
    <property type="term" value="F:transcription coregulator activity"/>
    <property type="evidence" value="ECO:0007669"/>
    <property type="project" value="EnsemblPlants"/>
</dbReference>
<dbReference type="GO" id="GO:0008270">
    <property type="term" value="F:zinc ion binding"/>
    <property type="evidence" value="ECO:0007669"/>
    <property type="project" value="UniProtKB-KW"/>
</dbReference>
<dbReference type="GO" id="GO:0042742">
    <property type="term" value="P:defense response to bacterium"/>
    <property type="evidence" value="ECO:0000315"/>
    <property type="project" value="UniProtKB"/>
</dbReference>
<dbReference type="GO" id="GO:0050832">
    <property type="term" value="P:defense response to fungus"/>
    <property type="evidence" value="ECO:0000315"/>
    <property type="project" value="UniProtKB"/>
</dbReference>
<dbReference type="GO" id="GO:0106167">
    <property type="term" value="P:extracellular ATP signaling"/>
    <property type="evidence" value="ECO:0007669"/>
    <property type="project" value="EnsemblPlants"/>
</dbReference>
<dbReference type="GO" id="GO:0009682">
    <property type="term" value="P:induced systemic resistance"/>
    <property type="evidence" value="ECO:0007669"/>
    <property type="project" value="EnsemblPlants"/>
</dbReference>
<dbReference type="GO" id="GO:0031348">
    <property type="term" value="P:negative regulation of defense response"/>
    <property type="evidence" value="ECO:0007669"/>
    <property type="project" value="EnsemblPlants"/>
</dbReference>
<dbReference type="GO" id="GO:0045893">
    <property type="term" value="P:positive regulation of DNA-templated transcription"/>
    <property type="evidence" value="ECO:0007669"/>
    <property type="project" value="EnsemblPlants"/>
</dbReference>
<dbReference type="GO" id="GO:1900424">
    <property type="term" value="P:regulation of defense response to bacterium"/>
    <property type="evidence" value="ECO:0007669"/>
    <property type="project" value="EnsemblPlants"/>
</dbReference>
<dbReference type="GO" id="GO:2000022">
    <property type="term" value="P:regulation of jasmonic acid mediated signaling pathway"/>
    <property type="evidence" value="ECO:0000318"/>
    <property type="project" value="GO_Central"/>
</dbReference>
<dbReference type="GO" id="GO:2000031">
    <property type="term" value="P:regulation of salicylic acid mediated signaling pathway"/>
    <property type="evidence" value="ECO:0007669"/>
    <property type="project" value="EnsemblPlants"/>
</dbReference>
<dbReference type="GO" id="GO:0010112">
    <property type="term" value="P:regulation of systemic acquired resistance"/>
    <property type="evidence" value="ECO:0007669"/>
    <property type="project" value="EnsemblPlants"/>
</dbReference>
<dbReference type="GO" id="GO:0009408">
    <property type="term" value="P:response to heat"/>
    <property type="evidence" value="ECO:0007669"/>
    <property type="project" value="EnsemblPlants"/>
</dbReference>
<dbReference type="GO" id="GO:0080027">
    <property type="term" value="P:response to herbivore"/>
    <property type="evidence" value="ECO:0000315"/>
    <property type="project" value="UniProtKB"/>
</dbReference>
<dbReference type="GO" id="GO:0001666">
    <property type="term" value="P:response to hypoxia"/>
    <property type="evidence" value="ECO:0007669"/>
    <property type="project" value="EnsemblPlants"/>
</dbReference>
<dbReference type="GO" id="GO:0009625">
    <property type="term" value="P:response to insect"/>
    <property type="evidence" value="ECO:0007669"/>
    <property type="project" value="EnsemblPlants"/>
</dbReference>
<dbReference type="GO" id="GO:0009611">
    <property type="term" value="P:response to wounding"/>
    <property type="evidence" value="ECO:0007669"/>
    <property type="project" value="EnsemblPlants"/>
</dbReference>
<dbReference type="GO" id="GO:0009862">
    <property type="term" value="P:systemic acquired resistance, salicylic acid mediated signaling pathway"/>
    <property type="evidence" value="ECO:0007669"/>
    <property type="project" value="EnsemblPlants"/>
</dbReference>
<dbReference type="FunFam" id="1.25.40.20:FF:000239">
    <property type="entry name" value="BTB/POZ domain and ankyrin repeat-containing protein NPR1"/>
    <property type="match status" value="1"/>
</dbReference>
<dbReference type="FunFam" id="3.30.710.10:FF:000184">
    <property type="entry name" value="BTB/POZ domain and ankyrin repeat-containing protein NPR1"/>
    <property type="match status" value="1"/>
</dbReference>
<dbReference type="Gene3D" id="1.25.40.20">
    <property type="entry name" value="Ankyrin repeat-containing domain"/>
    <property type="match status" value="1"/>
</dbReference>
<dbReference type="Gene3D" id="3.30.710.10">
    <property type="entry name" value="Potassium Channel Kv1.1, Chain A"/>
    <property type="match status" value="1"/>
</dbReference>
<dbReference type="InterPro" id="IPR002110">
    <property type="entry name" value="Ankyrin_rpt"/>
</dbReference>
<dbReference type="InterPro" id="IPR036770">
    <property type="entry name" value="Ankyrin_rpt-contain_sf"/>
</dbReference>
<dbReference type="InterPro" id="IPR000210">
    <property type="entry name" value="BTB/POZ_dom"/>
</dbReference>
<dbReference type="InterPro" id="IPR044292">
    <property type="entry name" value="NPR"/>
</dbReference>
<dbReference type="InterPro" id="IPR021094">
    <property type="entry name" value="NPR1/NIM1-like_C"/>
</dbReference>
<dbReference type="InterPro" id="IPR024228">
    <property type="entry name" value="NPR_central_dom"/>
</dbReference>
<dbReference type="InterPro" id="IPR011333">
    <property type="entry name" value="SKP1/BTB/POZ_sf"/>
</dbReference>
<dbReference type="PANTHER" id="PTHR46475:SF1">
    <property type="entry name" value="REGULATORY PROTEIN NPR2"/>
    <property type="match status" value="1"/>
</dbReference>
<dbReference type="PANTHER" id="PTHR46475">
    <property type="entry name" value="REGULATORY PROTEIN NPR3"/>
    <property type="match status" value="1"/>
</dbReference>
<dbReference type="Pfam" id="PF11900">
    <property type="entry name" value="DUF3420"/>
    <property type="match status" value="1"/>
</dbReference>
<dbReference type="Pfam" id="PF12313">
    <property type="entry name" value="NPR1_like_C"/>
    <property type="match status" value="1"/>
</dbReference>
<dbReference type="SMART" id="SM00248">
    <property type="entry name" value="ANK"/>
    <property type="match status" value="3"/>
</dbReference>
<dbReference type="SMART" id="SM00225">
    <property type="entry name" value="BTB"/>
    <property type="match status" value="1"/>
</dbReference>
<dbReference type="SUPFAM" id="SSF48403">
    <property type="entry name" value="Ankyrin repeat"/>
    <property type="match status" value="1"/>
</dbReference>
<dbReference type="SUPFAM" id="SSF54695">
    <property type="entry name" value="POZ domain"/>
    <property type="match status" value="1"/>
</dbReference>
<dbReference type="PROSITE" id="PS50297">
    <property type="entry name" value="ANK_REP_REGION"/>
    <property type="match status" value="1"/>
</dbReference>
<dbReference type="PROSITE" id="PS50088">
    <property type="entry name" value="ANK_REPEAT"/>
    <property type="match status" value="1"/>
</dbReference>
<dbReference type="PROSITE" id="PS50097">
    <property type="entry name" value="BTB"/>
    <property type="match status" value="1"/>
</dbReference>
<dbReference type="PROSITE" id="PS52046">
    <property type="entry name" value="ZF_C2HC_NPR"/>
    <property type="match status" value="1"/>
</dbReference>
<feature type="chain" id="PRO_0000437000" description="BTB/POZ domain and ankyrin repeat-containing protein NPR1">
    <location>
        <begin position="1"/>
        <end position="582"/>
    </location>
</feature>
<feature type="domain" description="BTB" evidence="5">
    <location>
        <begin position="55"/>
        <end position="140"/>
    </location>
</feature>
<feature type="repeat" description="ANK 1" evidence="4">
    <location>
        <begin position="229"/>
        <end position="258"/>
    </location>
</feature>
<feature type="repeat" description="ANK 2" evidence="4">
    <location>
        <begin position="269"/>
        <end position="299"/>
    </location>
</feature>
<feature type="repeat" description="ANK 3" evidence="4">
    <location>
        <begin position="301"/>
        <end position="328"/>
    </location>
</feature>
<feature type="repeat" description="ANK 4" evidence="4">
    <location>
        <begin position="332"/>
        <end position="361"/>
    </location>
</feature>
<feature type="zinc finger region" description="C2HC NPR-type" evidence="6">
    <location>
        <begin position="147"/>
        <end position="161"/>
    </location>
</feature>
<feature type="region of interest" description="Disordered" evidence="7">
    <location>
        <begin position="1"/>
        <end position="25"/>
    </location>
</feature>
<feature type="region of interest" description="Salicylic acid-binding core (SBC)" evidence="3">
    <location>
        <begin position="391"/>
        <end position="526"/>
    </location>
</feature>
<feature type="region of interest" description="Disordered" evidence="7">
    <location>
        <begin position="551"/>
        <end position="582"/>
    </location>
</feature>
<feature type="compositionally biased region" description="Polar residues" evidence="7">
    <location>
        <begin position="1"/>
        <end position="18"/>
    </location>
</feature>
<feature type="compositionally biased region" description="Basic and acidic residues" evidence="7">
    <location>
        <begin position="553"/>
        <end position="563"/>
    </location>
</feature>
<feature type="compositionally biased region" description="Low complexity" evidence="7">
    <location>
        <begin position="564"/>
        <end position="574"/>
    </location>
</feature>
<feature type="binding site" evidence="6">
    <location>
        <position position="150"/>
    </location>
    <ligand>
        <name>Zn(2+)</name>
        <dbReference type="ChEBI" id="CHEBI:29105"/>
    </ligand>
</feature>
<feature type="binding site" evidence="6">
    <location>
        <position position="155"/>
    </location>
    <ligand>
        <name>Zn(2+)</name>
        <dbReference type="ChEBI" id="CHEBI:29105"/>
    </ligand>
</feature>
<feature type="binding site" evidence="6">
    <location>
        <position position="157"/>
    </location>
    <ligand>
        <name>Zn(2+)</name>
        <dbReference type="ChEBI" id="CHEBI:29105"/>
    </ligand>
</feature>
<feature type="binding site" evidence="6">
    <location>
        <position position="160"/>
    </location>
    <ligand>
        <name>Zn(2+)</name>
        <dbReference type="ChEBI" id="CHEBI:29105"/>
    </ligand>
</feature>
<feature type="binding site" evidence="3">
    <location>
        <position position="436"/>
    </location>
    <ligand>
        <name>salicylate</name>
        <dbReference type="ChEBI" id="CHEBI:30762"/>
    </ligand>
</feature>
<feature type="disulfide bond" description="Interchain (with C-216); in linked form" evidence="2">
    <location>
        <position position="76"/>
    </location>
</feature>
<feature type="disulfide bond" description="Interchain (with C-76); in linked form" evidence="2">
    <location>
        <position position="216"/>
    </location>
</feature>
<feature type="mutagenesis site" description="Nuclear localization; when associated with A-216." evidence="8">
    <original>C</original>
    <variation>A</variation>
    <location>
        <position position="76"/>
    </location>
</feature>
<feature type="mutagenesis site" description="Nuclear localization; when associated with A-76." evidence="8">
    <original>C</original>
    <variation>A</variation>
    <location>
        <position position="216"/>
    </location>
</feature>
<feature type="sequence conflict" description="In Ref. 2; AAP92751." evidence="14" ref="2">
    <original>E</original>
    <variation>G</variation>
    <location>
        <position position="112"/>
    </location>
</feature>
<feature type="sequence conflict" description="In Ref. 2; AAP92751." evidence="14" ref="2">
    <original>K</original>
    <variation>N</variation>
    <location>
        <position position="269"/>
    </location>
</feature>
<feature type="sequence conflict" description="In Ref. 2; AAP92751." evidence="14" ref="2">
    <original>K</original>
    <variation>Q</variation>
    <location>
        <position position="313"/>
    </location>
</feature>
<feature type="sequence conflict" description="In Ref. 2; AAP92751." evidence="14" ref="2">
    <original>A</original>
    <variation>G</variation>
    <location>
        <position position="369"/>
    </location>
</feature>
<reference key="1">
    <citation type="journal article" date="2007" name="Plant Biotechnol. J.">
        <title>Functional analysis of rice NPR1-like genes reveals that OsNPR1/NH1 is the rice orthologue conferring disease resistance with enhanced herbivore susceptibility.</title>
        <authorList>
            <person name="Yuan Y."/>
            <person name="Zhong S."/>
            <person name="Li Q."/>
            <person name="Zhu Z."/>
            <person name="Lou Y."/>
            <person name="Wang L."/>
            <person name="Wang J."/>
            <person name="Wang M."/>
            <person name="Li Q."/>
            <person name="Yang D."/>
            <person name="He Z."/>
        </authorList>
    </citation>
    <scope>NUCLEOTIDE SEQUENCE [GENOMIC DNA / MRNA]</scope>
    <scope>FUNCTION</scope>
    <scope>SUBCELLULAR LOCATION</scope>
    <scope>MUTAGENESIS OF CYS-76 AND CYS-216</scope>
</reference>
<reference key="2">
    <citation type="submission" date="2003-06" db="EMBL/GenBank/DDBJ databases">
        <title>Rice NPR1-like protein, cloned from SA treated seedling cDNA libary, shows disease resistent characteristics.</title>
        <authorList>
            <person name="Quanhong Y."/>
            <person name="Rihe P."/>
            <person name="Aisheng X."/>
        </authorList>
    </citation>
    <scope>NUCLEOTIDE SEQUENCE [MRNA]</scope>
</reference>
<reference key="3">
    <citation type="submission" date="2010-07" db="EMBL/GenBank/DDBJ databases">
        <title>Oryza sativa japonica group cultivar Dongjin putative NPR1-like protein 2 (NPR2) mRNA.</title>
        <authorList>
            <person name="Moon S.-J."/>
            <person name="Shin D."/>
            <person name="Kim B.-G."/>
            <person name="Park S.R."/>
            <person name="Byun M.-O."/>
        </authorList>
    </citation>
    <scope>NUCLEOTIDE SEQUENCE [MRNA]</scope>
    <source>
        <strain>cv. Dongjin</strain>
    </source>
</reference>
<reference key="4">
    <citation type="journal article" date="2002" name="Nature">
        <title>The genome sequence and structure of rice chromosome 1.</title>
        <authorList>
            <person name="Sasaki T."/>
            <person name="Matsumoto T."/>
            <person name="Yamamoto K."/>
            <person name="Sakata K."/>
            <person name="Baba T."/>
            <person name="Katayose Y."/>
            <person name="Wu J."/>
            <person name="Niimura Y."/>
            <person name="Cheng Z."/>
            <person name="Nagamura Y."/>
            <person name="Antonio B.A."/>
            <person name="Kanamori H."/>
            <person name="Hosokawa S."/>
            <person name="Masukawa M."/>
            <person name="Arikawa K."/>
            <person name="Chiden Y."/>
            <person name="Hayashi M."/>
            <person name="Okamoto M."/>
            <person name="Ando T."/>
            <person name="Aoki H."/>
            <person name="Arita K."/>
            <person name="Hamada M."/>
            <person name="Harada C."/>
            <person name="Hijishita S."/>
            <person name="Honda M."/>
            <person name="Ichikawa Y."/>
            <person name="Idonuma A."/>
            <person name="Iijima M."/>
            <person name="Ikeda M."/>
            <person name="Ikeno M."/>
            <person name="Ito S."/>
            <person name="Ito T."/>
            <person name="Ito Y."/>
            <person name="Ito Y."/>
            <person name="Iwabuchi A."/>
            <person name="Kamiya K."/>
            <person name="Karasawa W."/>
            <person name="Katagiri S."/>
            <person name="Kikuta A."/>
            <person name="Kobayashi N."/>
            <person name="Kono I."/>
            <person name="Machita K."/>
            <person name="Maehara T."/>
            <person name="Mizuno H."/>
            <person name="Mizubayashi T."/>
            <person name="Mukai Y."/>
            <person name="Nagasaki H."/>
            <person name="Nakashima M."/>
            <person name="Nakama Y."/>
            <person name="Nakamichi Y."/>
            <person name="Nakamura M."/>
            <person name="Namiki N."/>
            <person name="Negishi M."/>
            <person name="Ohta I."/>
            <person name="Ono N."/>
            <person name="Saji S."/>
            <person name="Sakai K."/>
            <person name="Shibata M."/>
            <person name="Shimokawa T."/>
            <person name="Shomura A."/>
            <person name="Song J."/>
            <person name="Takazaki Y."/>
            <person name="Terasawa K."/>
            <person name="Tsuji K."/>
            <person name="Waki K."/>
            <person name="Yamagata H."/>
            <person name="Yamane H."/>
            <person name="Yoshiki S."/>
            <person name="Yoshihara R."/>
            <person name="Yukawa K."/>
            <person name="Zhong H."/>
            <person name="Iwama H."/>
            <person name="Endo T."/>
            <person name="Ito H."/>
            <person name="Hahn J.H."/>
            <person name="Kim H.-I."/>
            <person name="Eun M.-Y."/>
            <person name="Yano M."/>
            <person name="Jiang J."/>
            <person name="Gojobori T."/>
        </authorList>
    </citation>
    <scope>NUCLEOTIDE SEQUENCE [LARGE SCALE GENOMIC DNA]</scope>
    <source>
        <strain>cv. Nipponbare</strain>
    </source>
</reference>
<reference key="5">
    <citation type="journal article" date="2005" name="Nature">
        <title>The map-based sequence of the rice genome.</title>
        <authorList>
            <consortium name="International rice genome sequencing project (IRGSP)"/>
        </authorList>
    </citation>
    <scope>NUCLEOTIDE SEQUENCE [LARGE SCALE GENOMIC DNA]</scope>
    <source>
        <strain>cv. Nipponbare</strain>
    </source>
</reference>
<reference key="6">
    <citation type="journal article" date="2008" name="Nucleic Acids Res.">
        <title>The rice annotation project database (RAP-DB): 2008 update.</title>
        <authorList>
            <consortium name="The rice annotation project (RAP)"/>
        </authorList>
    </citation>
    <scope>GENOME REANNOTATION</scope>
    <source>
        <strain>cv. Nipponbare</strain>
    </source>
</reference>
<reference key="7">
    <citation type="journal article" date="2013" name="Rice">
        <title>Improvement of the Oryza sativa Nipponbare reference genome using next generation sequence and optical map data.</title>
        <authorList>
            <person name="Kawahara Y."/>
            <person name="de la Bastide M."/>
            <person name="Hamilton J.P."/>
            <person name="Kanamori H."/>
            <person name="McCombie W.R."/>
            <person name="Ouyang S."/>
            <person name="Schwartz D.C."/>
            <person name="Tanaka T."/>
            <person name="Wu J."/>
            <person name="Zhou S."/>
            <person name="Childs K.L."/>
            <person name="Davidson R.M."/>
            <person name="Lin H."/>
            <person name="Quesada-Ocampo L."/>
            <person name="Vaillancourt B."/>
            <person name="Sakai H."/>
            <person name="Lee S.S."/>
            <person name="Kim J."/>
            <person name="Numa H."/>
            <person name="Itoh T."/>
            <person name="Buell C.R."/>
            <person name="Matsumoto T."/>
        </authorList>
    </citation>
    <scope>GENOME REANNOTATION</scope>
    <source>
        <strain>cv. Nipponbare</strain>
    </source>
</reference>
<reference key="8">
    <citation type="journal article" date="2003" name="Science">
        <title>Collection, mapping, and annotation of over 28,000 cDNA clones from japonica rice.</title>
        <authorList>
            <consortium name="The rice full-length cDNA consortium"/>
        </authorList>
    </citation>
    <scope>NUCLEOTIDE SEQUENCE [LARGE SCALE MRNA]</scope>
    <source>
        <strain>cv. Nipponbare</strain>
    </source>
</reference>
<reference key="9">
    <citation type="journal article" date="2010" name="Plant Mol. Biol.">
        <title>Role of OsNPR1 in rice defense program as revealed by genome-wide expression analysis.</title>
        <authorList>
            <person name="Sugano S."/>
            <person name="Jiang C.J."/>
            <person name="Miyazawa S."/>
            <person name="Masumoto C."/>
            <person name="Yazawa K."/>
            <person name="Hayashi N."/>
            <person name="Shimono M."/>
            <person name="Nakayama A."/>
            <person name="Miyao M."/>
            <person name="Takatsuji H."/>
        </authorList>
    </citation>
    <scope>FUNCTION</scope>
</reference>
<reference key="10">
    <citation type="journal article" date="2012" name="Plant Methods">
        <title>A rice transient assay system identifies a novel domain in NRR required for interaction with NH1/OsNPR1 and inhibition of NH1-mediated transcriptional activation.</title>
        <authorList>
            <person name="Chern M."/>
            <person name="Bai W."/>
            <person name="Sze-To W.H."/>
            <person name="Canlas P.E."/>
            <person name="Bartley L.E."/>
            <person name="Ronald P.C."/>
        </authorList>
    </citation>
    <scope>INTERACTION WITH NRR; RH1; RH2 AND RH3</scope>
</reference>
<reference key="11">
    <citation type="journal article" date="2013" name="Physiol. Plantarum">
        <title>OsNPR1 negatively regulates herbivore-induced JA and ethylene signaling and plant resistance to a chewing herbivore in rice.</title>
        <authorList>
            <person name="Li R."/>
            <person name="Afsheen S."/>
            <person name="Xin Z."/>
            <person name="Han X."/>
            <person name="Lou Y."/>
        </authorList>
    </citation>
    <scope>FUNCTION</scope>
    <scope>INDUCTION</scope>
</reference>
<reference key="12">
    <citation type="journal article" date="2014" name="BMC Genomics">
        <title>Interaction specificity and coexpression of rice NPR1 homologs 1 and 3 (NH1 and NH3), TGA transcription factors and negative regulator of resistance (NRR) proteins.</title>
        <authorList>
            <person name="Chern M."/>
            <person name="Bai W."/>
            <person name="Ruan D."/>
            <person name="Oh T."/>
            <person name="Chen X."/>
            <person name="Ronald P.C."/>
        </authorList>
    </citation>
    <scope>INTERACTION WITH TGA2.1; TGA2.2; TGA2.3; LG2; TGAL1; TGAL4; NRR; RH1; RH2 AND RH3</scope>
</reference>
<reference key="13">
    <citation type="journal article" date="2016" name="PLoS Genet.">
        <title>A genetic screen identifies a requirement for cysteine-rich-receptor-like kinases in rice NH1 (OsNPR1)-mediated immunity.</title>
        <authorList>
            <person name="Chern M."/>
            <person name="Xu Q."/>
            <person name="Bart R.S."/>
            <person name="Bai W."/>
            <person name="Ruan D."/>
            <person name="Sze-To W.H."/>
            <person name="Canlas P.E."/>
            <person name="Jain R."/>
            <person name="Chen X."/>
            <person name="Ronald P.C."/>
        </authorList>
    </citation>
    <scope>FUNCTION</scope>
    <scope>INDUCTION BY BTH</scope>
</reference>
<name>NPR1_ORYSJ</name>
<organism>
    <name type="scientific">Oryza sativa subsp. japonica</name>
    <name type="common">Rice</name>
    <dbReference type="NCBI Taxonomy" id="39947"/>
    <lineage>
        <taxon>Eukaryota</taxon>
        <taxon>Viridiplantae</taxon>
        <taxon>Streptophyta</taxon>
        <taxon>Embryophyta</taxon>
        <taxon>Tracheophyta</taxon>
        <taxon>Spermatophyta</taxon>
        <taxon>Magnoliopsida</taxon>
        <taxon>Liliopsida</taxon>
        <taxon>Poales</taxon>
        <taxon>Poaceae</taxon>
        <taxon>BOP clade</taxon>
        <taxon>Oryzoideae</taxon>
        <taxon>Oryzeae</taxon>
        <taxon>Oryzinae</taxon>
        <taxon>Oryza</taxon>
        <taxon>Oryza sativa</taxon>
    </lineage>
</organism>
<gene>
    <name evidence="13" type="primary">NPR1</name>
    <name evidence="14" type="synonym">NH1</name>
    <name evidence="17" type="ordered locus">Os01g0194300</name>
    <name evidence="14" type="ordered locus">LOC_Os01g09800</name>
    <name evidence="16" type="ORF">P0001B06.13</name>
    <name evidence="15" type="ORF">P0671B11.44</name>
</gene>
<keyword id="KW-0040">ANK repeat</keyword>
<keyword id="KW-0963">Cytoplasm</keyword>
<keyword id="KW-1015">Disulfide bond</keyword>
<keyword id="KW-0479">Metal-binding</keyword>
<keyword id="KW-0539">Nucleus</keyword>
<keyword id="KW-0611">Plant defense</keyword>
<keyword id="KW-1185">Reference proteome</keyword>
<keyword id="KW-0677">Repeat</keyword>
<keyword id="KW-0833">Ubl conjugation pathway</keyword>
<keyword id="KW-0862">Zinc</keyword>
<keyword id="KW-0863">Zinc-finger</keyword>
<accession>Q9FDY4</accession>
<accession>Q7XBH3</accession>
<protein>
    <recommendedName>
        <fullName evidence="14">BTB/POZ domain and ankyrin repeat-containing protein NPR1</fullName>
        <shortName evidence="13">OsNPR1</shortName>
    </recommendedName>
    <alternativeName>
        <fullName evidence="14">NPR1 homolog 1</fullName>
        <shortName evidence="14">OsNH1</shortName>
    </alternativeName>
</protein>
<comment type="function">
    <text evidence="1 2 3 8 9 10 11">Salicylic acid (SA)-binding substrate-specific adapter of an E3 ubiquitin-protein ligase complex (CUL3-RBX1-BTB) which mediates the ubiquitination and subsequent proteasomal degradation of target proteins (By similarity). Transcription cofactor that represses gene expression in the absence of salicylic acid (SA), when attached to negative cis-elements (W-box) with WRKY transcription factors, but stimulates gene expression upon activation by SA, when sumoylated and attached to positive cis-elements (as-1) with TGA transcription factors, thus confering immunity through a series of gene regulations ending in a significant increase in antimicrobial and defense genes expression (By similarity). Key positive factor of disease resistance. Plays an essential role in benzothiadiazole (BTH)-induced resistance to the blast fungus disease caused by Magnaporthe oryzae (PubMed:20924648). Involved in defense response against the bacterial blight disease caused by Xanthomonas oryzae pv. oryzae (Xoo). Over-expression of NPR1/NH1 confers disease resistance to Xoo, but also enhances herbivore susceptibility (PubMed:17309686). Functions as a transcriptional coactivator of TGA2.1 and LG2 in vitro (PubMed:22353606). Involved in defense response against herbivore. Plants silencing NPR1/NH1 have increased herbivore-induced trypsin proteinase inhibitors and volatiles, which reduces the performance of the striped stem borer (SSB) Chilo suppressalis (PubMed:22694163).</text>
</comment>
<comment type="pathway">
    <text evidence="1">Protein modification; protein ubiquitination.</text>
</comment>
<comment type="subunit">
    <text evidence="8 10 12">Oligomer in an uninduced state; disulfide-linked. Forms activated monomer upon changes in cellular redox potential (PubMed:17309686). Interacts with TGA2.1, TGA2.2, TGA2.3, LG2, TGAL1 and TGAL4 (PubMed:24919709). Interacts with NRR, RH1, RH2 and RH3 (PubMed:22353606, PubMed:24919709).</text>
</comment>
<comment type="subcellular location">
    <subcellularLocation>
        <location evidence="8">Cytoplasm</location>
    </subcellularLocation>
    <subcellularLocation>
        <location evidence="8">Nucleus</location>
    </subcellularLocation>
    <subcellularLocation>
        <location evidence="2">Nucleus</location>
        <location evidence="2">Nuclear body</location>
    </subcellularLocation>
    <text evidence="8">Accumulation as monomer in nucleus after induction by salicylic acid (SA) treatment or after pathogen infection.</text>
</comment>
<comment type="induction">
    <text evidence="11">By mechanical wounding, treatment with jasmonic acid (JA), salicylic acid (SA) and benzothiadiazole (BTH), and in response to infestation by the rice striped stem borer Chilo suppressalis and rice leaf folder Cnaphalocrocis medinalis.</text>
</comment>
<comment type="domain">
    <text evidence="1">The BTB/POZ domain mediates the interaction with some component of ubiquitin ligase complexes.</text>
</comment>
<comment type="similarity">
    <text evidence="14">Belongs to the plant 'ANKYRIN-BTB/POZ' family. 'NPR1-like' subfamily.</text>
</comment>
<sequence length="582" mass="63766">MEPPTSHVTNAFSDSDSASVEEGGADADADVEALRRLSDNLAAAFRSPEDFAFLADARIAVPGGGGGGGDLLVHRCVLSARSPFLRGVFARRAAAAAGGGGEDGGERLELRELLGGGGEEVEVGYEALRLVLDYLYSGRVGDLPKAACLCVDEDCAHVGCHPAVAFMAQVLFAASTFQVAELTNLFQRRLLDVLDKVEVDNLLLILSVANLCNKSCMKLLERCLDMVVRSNLDMITLEKSLPPDVIKQIIDARLSLGLISPENKGFPNKHVRRIHRALDSDDVELVRMLLTEGQTNLDDAFALHYAVEHCDSKITTELLDLALADVNHRNPRGYTVLHIAARRREPKIIVSLLTKGARPADVTFDGRKAVQISKRLTKQGDYFGVTEEGKPSPKDRLCIEILEQAERRDPQLGEASVSLAMAGESLRGRLLYLENRVALARIMFPMEARVAMDIAQVDGTLEFNLGSGANPPPERQRTTVDLNESPFIMKEEHLARMTALSKTVELGKRFFPRCSNVLDKIMDDETDPVSLGRDTSAEKRKRFHDLQDVLQKAFHEDKEENDRSGLSSSSSSTSIGAIRPRR</sequence>